<organism>
    <name type="scientific">Clostridium kluyveri (strain NBRC 12016)</name>
    <dbReference type="NCBI Taxonomy" id="583346"/>
    <lineage>
        <taxon>Bacteria</taxon>
        <taxon>Bacillati</taxon>
        <taxon>Bacillota</taxon>
        <taxon>Clostridia</taxon>
        <taxon>Eubacteriales</taxon>
        <taxon>Clostridiaceae</taxon>
        <taxon>Clostridium</taxon>
    </lineage>
</organism>
<protein>
    <recommendedName>
        <fullName evidence="1">Small ribosomal subunit protein uS11</fullName>
    </recommendedName>
    <alternativeName>
        <fullName evidence="2">30S ribosomal protein S11</fullName>
    </alternativeName>
</protein>
<accession>B9DYD5</accession>
<gene>
    <name evidence="1" type="primary">rpsK</name>
    <name type="ordered locus">CKR_0209</name>
</gene>
<reference key="1">
    <citation type="submission" date="2005-09" db="EMBL/GenBank/DDBJ databases">
        <title>Complete genome sequence of Clostridium kluyveri and comparative genomics of Clostridia species.</title>
        <authorList>
            <person name="Inui M."/>
            <person name="Nonaka H."/>
            <person name="Shinoda Y."/>
            <person name="Ikenaga Y."/>
            <person name="Abe M."/>
            <person name="Naito K."/>
            <person name="Vertes A.A."/>
            <person name="Yukawa H."/>
        </authorList>
    </citation>
    <scope>NUCLEOTIDE SEQUENCE [LARGE SCALE GENOMIC DNA]</scope>
    <source>
        <strain>NBRC 12016</strain>
    </source>
</reference>
<keyword id="KW-0687">Ribonucleoprotein</keyword>
<keyword id="KW-0689">Ribosomal protein</keyword>
<keyword id="KW-0694">RNA-binding</keyword>
<keyword id="KW-0699">rRNA-binding</keyword>
<name>RS11_CLOK1</name>
<dbReference type="EMBL" id="AP009049">
    <property type="protein sequence ID" value="BAH05260.1"/>
    <property type="molecule type" value="Genomic_DNA"/>
</dbReference>
<dbReference type="RefSeq" id="WP_011988829.1">
    <property type="nucleotide sequence ID" value="NC_011837.1"/>
</dbReference>
<dbReference type="SMR" id="B9DYD5"/>
<dbReference type="KEGG" id="ckr:CKR_0209"/>
<dbReference type="HOGENOM" id="CLU_072439_5_0_9"/>
<dbReference type="Proteomes" id="UP000007969">
    <property type="component" value="Chromosome"/>
</dbReference>
<dbReference type="GO" id="GO:1990904">
    <property type="term" value="C:ribonucleoprotein complex"/>
    <property type="evidence" value="ECO:0007669"/>
    <property type="project" value="UniProtKB-KW"/>
</dbReference>
<dbReference type="GO" id="GO:0005840">
    <property type="term" value="C:ribosome"/>
    <property type="evidence" value="ECO:0007669"/>
    <property type="project" value="UniProtKB-KW"/>
</dbReference>
<dbReference type="GO" id="GO:0019843">
    <property type="term" value="F:rRNA binding"/>
    <property type="evidence" value="ECO:0007669"/>
    <property type="project" value="UniProtKB-UniRule"/>
</dbReference>
<dbReference type="GO" id="GO:0003735">
    <property type="term" value="F:structural constituent of ribosome"/>
    <property type="evidence" value="ECO:0007669"/>
    <property type="project" value="InterPro"/>
</dbReference>
<dbReference type="GO" id="GO:0006412">
    <property type="term" value="P:translation"/>
    <property type="evidence" value="ECO:0007669"/>
    <property type="project" value="UniProtKB-UniRule"/>
</dbReference>
<dbReference type="FunFam" id="3.30.420.80:FF:000001">
    <property type="entry name" value="30S ribosomal protein S11"/>
    <property type="match status" value="1"/>
</dbReference>
<dbReference type="Gene3D" id="3.30.420.80">
    <property type="entry name" value="Ribosomal protein S11"/>
    <property type="match status" value="1"/>
</dbReference>
<dbReference type="HAMAP" id="MF_01310">
    <property type="entry name" value="Ribosomal_uS11"/>
    <property type="match status" value="1"/>
</dbReference>
<dbReference type="InterPro" id="IPR001971">
    <property type="entry name" value="Ribosomal_uS11"/>
</dbReference>
<dbReference type="InterPro" id="IPR019981">
    <property type="entry name" value="Ribosomal_uS11_bac-type"/>
</dbReference>
<dbReference type="InterPro" id="IPR018102">
    <property type="entry name" value="Ribosomal_uS11_CS"/>
</dbReference>
<dbReference type="InterPro" id="IPR036967">
    <property type="entry name" value="Ribosomal_uS11_sf"/>
</dbReference>
<dbReference type="NCBIfam" id="NF003698">
    <property type="entry name" value="PRK05309.1"/>
    <property type="match status" value="1"/>
</dbReference>
<dbReference type="NCBIfam" id="TIGR03632">
    <property type="entry name" value="uS11_bact"/>
    <property type="match status" value="1"/>
</dbReference>
<dbReference type="PANTHER" id="PTHR11759">
    <property type="entry name" value="40S RIBOSOMAL PROTEIN S14/30S RIBOSOMAL PROTEIN S11"/>
    <property type="match status" value="1"/>
</dbReference>
<dbReference type="Pfam" id="PF00411">
    <property type="entry name" value="Ribosomal_S11"/>
    <property type="match status" value="1"/>
</dbReference>
<dbReference type="PIRSF" id="PIRSF002131">
    <property type="entry name" value="Ribosomal_S11"/>
    <property type="match status" value="1"/>
</dbReference>
<dbReference type="SUPFAM" id="SSF53137">
    <property type="entry name" value="Translational machinery components"/>
    <property type="match status" value="1"/>
</dbReference>
<dbReference type="PROSITE" id="PS00054">
    <property type="entry name" value="RIBOSOMAL_S11"/>
    <property type="match status" value="1"/>
</dbReference>
<comment type="function">
    <text evidence="1">Located on the platform of the 30S subunit, it bridges several disparate RNA helices of the 16S rRNA. Forms part of the Shine-Dalgarno cleft in the 70S ribosome.</text>
</comment>
<comment type="subunit">
    <text evidence="1">Part of the 30S ribosomal subunit. Interacts with proteins S7 and S18. Binds to IF-3.</text>
</comment>
<comment type="similarity">
    <text evidence="1">Belongs to the universal ribosomal protein uS11 family.</text>
</comment>
<feature type="chain" id="PRO_1000165540" description="Small ribosomal subunit protein uS11">
    <location>
        <begin position="1"/>
        <end position="132"/>
    </location>
</feature>
<sequence>MAAGRVKRTTRRKKERKNVEHGCAHIRSTFNNSIVTITDAAGNTLSWASAGGLGFRGSRKSTPFAAQMAAETSAKAAMEHGLKSIEVYVKGPGSGREAAIRSLQAAGLEVTLIKDVTPIPHNGCRPPKRRRV</sequence>
<evidence type="ECO:0000255" key="1">
    <source>
        <dbReference type="HAMAP-Rule" id="MF_01310"/>
    </source>
</evidence>
<evidence type="ECO:0000305" key="2"/>
<proteinExistence type="inferred from homology"/>